<evidence type="ECO:0000250" key="1"/>
<evidence type="ECO:0000255" key="2"/>
<evidence type="ECO:0000269" key="3">
    <source>
    </source>
</evidence>
<evidence type="ECO:0000305" key="4"/>
<accession>Q9LMX4</accession>
<dbReference type="EMBL" id="AC027656">
    <property type="protein sequence ID" value="AAF81302.1"/>
    <property type="molecule type" value="Genomic_DNA"/>
</dbReference>
<dbReference type="EMBL" id="CP002684">
    <property type="protein sequence ID" value="AEE29063.1"/>
    <property type="molecule type" value="Genomic_DNA"/>
</dbReference>
<dbReference type="EMBL" id="AY099570">
    <property type="protein sequence ID" value="AAM20422.1"/>
    <property type="molecule type" value="mRNA"/>
</dbReference>
<dbReference type="EMBL" id="BT001252">
    <property type="protein sequence ID" value="AAN65139.1"/>
    <property type="molecule type" value="mRNA"/>
</dbReference>
<dbReference type="EMBL" id="AY818190">
    <property type="protein sequence ID" value="AAV69752.1"/>
    <property type="molecule type" value="mRNA"/>
</dbReference>
<dbReference type="RefSeq" id="NP_172830.1">
    <property type="nucleotide sequence ID" value="NM_101243.5"/>
</dbReference>
<dbReference type="SMR" id="Q9LMX4"/>
<dbReference type="BioGRID" id="23175">
    <property type="interactions" value="1"/>
</dbReference>
<dbReference type="FunCoup" id="Q9LMX4">
    <property type="interactions" value="7"/>
</dbReference>
<dbReference type="IntAct" id="Q9LMX4">
    <property type="interactions" value="1"/>
</dbReference>
<dbReference type="STRING" id="3702.Q9LMX4"/>
<dbReference type="GlyCosmos" id="Q9LMX4">
    <property type="glycosylation" value="5 sites, No reported glycans"/>
</dbReference>
<dbReference type="GlyGen" id="Q9LMX4">
    <property type="glycosylation" value="5 sites"/>
</dbReference>
<dbReference type="PaxDb" id="3702-AT1G13750.1"/>
<dbReference type="ProteomicsDB" id="249020"/>
<dbReference type="EnsemblPlants" id="AT1G13750.1">
    <property type="protein sequence ID" value="AT1G13750.1"/>
    <property type="gene ID" value="AT1G13750"/>
</dbReference>
<dbReference type="GeneID" id="837935"/>
<dbReference type="Gramene" id="AT1G13750.1">
    <property type="protein sequence ID" value="AT1G13750.1"/>
    <property type="gene ID" value="AT1G13750"/>
</dbReference>
<dbReference type="KEGG" id="ath:AT1G13750"/>
<dbReference type="Araport" id="AT1G13750"/>
<dbReference type="TAIR" id="AT1G13750">
    <property type="gene designation" value="PAP1"/>
</dbReference>
<dbReference type="eggNOG" id="KOG1378">
    <property type="taxonomic scope" value="Eukaryota"/>
</dbReference>
<dbReference type="HOGENOM" id="CLU_013387_4_1_1"/>
<dbReference type="InParanoid" id="Q9LMX4"/>
<dbReference type="OMA" id="PMYIDST"/>
<dbReference type="PhylomeDB" id="Q9LMX4"/>
<dbReference type="PRO" id="PR:Q9LMX4"/>
<dbReference type="Proteomes" id="UP000006548">
    <property type="component" value="Chromosome 1"/>
</dbReference>
<dbReference type="ExpressionAtlas" id="Q9LMX4">
    <property type="expression patterns" value="baseline and differential"/>
</dbReference>
<dbReference type="GO" id="GO:0005576">
    <property type="term" value="C:extracellular region"/>
    <property type="evidence" value="ECO:0007669"/>
    <property type="project" value="UniProtKB-SubCell"/>
</dbReference>
<dbReference type="GO" id="GO:0003993">
    <property type="term" value="F:acid phosphatase activity"/>
    <property type="evidence" value="ECO:0007669"/>
    <property type="project" value="InterPro"/>
</dbReference>
<dbReference type="GO" id="GO:0046872">
    <property type="term" value="F:metal ion binding"/>
    <property type="evidence" value="ECO:0007669"/>
    <property type="project" value="UniProtKB-KW"/>
</dbReference>
<dbReference type="CDD" id="cd00839">
    <property type="entry name" value="MPP_PAPs"/>
    <property type="match status" value="1"/>
</dbReference>
<dbReference type="Gene3D" id="3.60.21.10">
    <property type="match status" value="1"/>
</dbReference>
<dbReference type="Gene3D" id="2.60.40.380">
    <property type="entry name" value="Purple acid phosphatase-like, N-terminal"/>
    <property type="match status" value="1"/>
</dbReference>
<dbReference type="InterPro" id="IPR004843">
    <property type="entry name" value="Calcineurin-like_PHP_ApaH"/>
</dbReference>
<dbReference type="InterPro" id="IPR040974">
    <property type="entry name" value="Fn3_PAP"/>
</dbReference>
<dbReference type="InterPro" id="IPR029052">
    <property type="entry name" value="Metallo-depent_PP-like"/>
</dbReference>
<dbReference type="InterPro" id="IPR041792">
    <property type="entry name" value="MPP_PAP"/>
</dbReference>
<dbReference type="InterPro" id="IPR008963">
    <property type="entry name" value="Purple_acid_Pase-like_N"/>
</dbReference>
<dbReference type="InterPro" id="IPR015914">
    <property type="entry name" value="Purple_acid_Pase_N"/>
</dbReference>
<dbReference type="InterPro" id="IPR025733">
    <property type="entry name" value="Purple_acid_PPase_C_dom"/>
</dbReference>
<dbReference type="PANTHER" id="PTHR45778:SF16">
    <property type="entry name" value="INACTIVE PURPLE ACID PHOSPHATASE 1-RELATED"/>
    <property type="match status" value="1"/>
</dbReference>
<dbReference type="PANTHER" id="PTHR45778">
    <property type="entry name" value="PURPLE ACID PHOSPHATASE-RELATED"/>
    <property type="match status" value="1"/>
</dbReference>
<dbReference type="Pfam" id="PF17808">
    <property type="entry name" value="fn3_PAP"/>
    <property type="match status" value="1"/>
</dbReference>
<dbReference type="Pfam" id="PF00149">
    <property type="entry name" value="Metallophos"/>
    <property type="match status" value="1"/>
</dbReference>
<dbReference type="Pfam" id="PF14008">
    <property type="entry name" value="Metallophos_C"/>
    <property type="match status" value="1"/>
</dbReference>
<dbReference type="Pfam" id="PF16656">
    <property type="entry name" value="Pur_ac_phosph_N"/>
    <property type="match status" value="1"/>
</dbReference>
<dbReference type="SUPFAM" id="SSF56300">
    <property type="entry name" value="Metallo-dependent phosphatases"/>
    <property type="match status" value="1"/>
</dbReference>
<dbReference type="SUPFAM" id="SSF49363">
    <property type="entry name" value="Purple acid phosphatase, N-terminal domain"/>
    <property type="match status" value="1"/>
</dbReference>
<comment type="cofactor">
    <cofactor evidence="1">
        <name>Fe cation</name>
        <dbReference type="ChEBI" id="CHEBI:24875"/>
    </cofactor>
    <text evidence="1">Binds 1 Fe cation per subunit.</text>
</comment>
<comment type="cofactor">
    <cofactor evidence="1">
        <name>Zn(2+)</name>
        <dbReference type="ChEBI" id="CHEBI:29105"/>
    </cofactor>
    <text evidence="1">Binds 1 zinc ion per subunit.</text>
</comment>
<comment type="subunit">
    <text evidence="1">Homodimer.</text>
</comment>
<comment type="subcellular location">
    <subcellularLocation>
        <location evidence="1">Secreted</location>
    </subcellularLocation>
</comment>
<comment type="tissue specificity">
    <text evidence="3">Expressed in roots, stems, leaves, flowers and siliques.</text>
</comment>
<comment type="similarity">
    <text evidence="4">Belongs to the metallophosphoesterase superfamily. Purple acid phosphatase family.</text>
</comment>
<comment type="caution">
    <text evidence="4">Lacks the conserved His residue essential for phosphatase activity. Its enzyme activity is therefore unsure.</text>
</comment>
<organism>
    <name type="scientific">Arabidopsis thaliana</name>
    <name type="common">Mouse-ear cress</name>
    <dbReference type="NCBI Taxonomy" id="3702"/>
    <lineage>
        <taxon>Eukaryota</taxon>
        <taxon>Viridiplantae</taxon>
        <taxon>Streptophyta</taxon>
        <taxon>Embryophyta</taxon>
        <taxon>Tracheophyta</taxon>
        <taxon>Spermatophyta</taxon>
        <taxon>Magnoliopsida</taxon>
        <taxon>eudicotyledons</taxon>
        <taxon>Gunneridae</taxon>
        <taxon>Pentapetalae</taxon>
        <taxon>rosids</taxon>
        <taxon>malvids</taxon>
        <taxon>Brassicales</taxon>
        <taxon>Brassicaceae</taxon>
        <taxon>Camelineae</taxon>
        <taxon>Arabidopsis</taxon>
    </lineage>
</organism>
<feature type="signal peptide" evidence="2">
    <location>
        <begin position="1"/>
        <end position="24"/>
    </location>
</feature>
<feature type="chain" id="PRO_0000372806" description="Probable inactive purple acid phosphatase 1">
    <location>
        <begin position="25"/>
        <end position="613"/>
    </location>
</feature>
<feature type="binding site" evidence="1">
    <location>
        <position position="295"/>
    </location>
    <ligand>
        <name>Fe cation</name>
        <dbReference type="ChEBI" id="CHEBI:24875"/>
    </ligand>
</feature>
<feature type="binding site" evidence="1">
    <location>
        <position position="336"/>
    </location>
    <ligand>
        <name>Fe cation</name>
        <dbReference type="ChEBI" id="CHEBI:24875"/>
    </ligand>
</feature>
<feature type="binding site" evidence="1">
    <location>
        <position position="336"/>
    </location>
    <ligand>
        <name>Zn(2+)</name>
        <dbReference type="ChEBI" id="CHEBI:29105"/>
    </ligand>
</feature>
<feature type="binding site" evidence="1">
    <location>
        <position position="339"/>
    </location>
    <ligand>
        <name>Fe cation</name>
        <dbReference type="ChEBI" id="CHEBI:24875"/>
    </ligand>
</feature>
<feature type="binding site" evidence="1">
    <location>
        <position position="369"/>
    </location>
    <ligand>
        <name>substrate</name>
    </ligand>
</feature>
<feature type="binding site" evidence="1">
    <location>
        <position position="369"/>
    </location>
    <ligand>
        <name>Zn(2+)</name>
        <dbReference type="ChEBI" id="CHEBI:29105"/>
    </ligand>
</feature>
<feature type="binding site" evidence="1">
    <location>
        <position position="458"/>
    </location>
    <ligand>
        <name>Zn(2+)</name>
        <dbReference type="ChEBI" id="CHEBI:29105"/>
    </ligand>
</feature>
<feature type="binding site" evidence="1">
    <location>
        <begin position="500"/>
        <end position="502"/>
    </location>
    <ligand>
        <name>substrate</name>
    </ligand>
</feature>
<feature type="binding site" evidence="1">
    <location>
        <position position="500"/>
    </location>
    <ligand>
        <name>Zn(2+)</name>
        <dbReference type="ChEBI" id="CHEBI:29105"/>
    </ligand>
</feature>
<feature type="binding site" evidence="1">
    <location>
        <position position="502"/>
    </location>
    <ligand>
        <name>Fe cation</name>
        <dbReference type="ChEBI" id="CHEBI:24875"/>
    </ligand>
</feature>
<feature type="glycosylation site" description="N-linked (GlcNAc...) asparagine" evidence="2">
    <location>
        <position position="89"/>
    </location>
</feature>
<feature type="glycosylation site" description="N-linked (GlcNAc...) asparagine" evidence="2">
    <location>
        <position position="116"/>
    </location>
</feature>
<feature type="glycosylation site" description="N-linked (GlcNAc...) asparagine" evidence="2">
    <location>
        <position position="316"/>
    </location>
</feature>
<feature type="glycosylation site" description="N-linked (GlcNAc...) asparagine" evidence="2">
    <location>
        <position position="528"/>
    </location>
</feature>
<feature type="glycosylation site" description="N-linked (GlcNAc...) asparagine" evidence="2">
    <location>
        <position position="551"/>
    </location>
</feature>
<name>PPA1_ARATH</name>
<gene>
    <name type="primary">PAP1</name>
    <name type="ordered locus">At1g13750</name>
    <name type="ORF">F21F23.18</name>
</gene>
<proteinExistence type="evidence at transcript level"/>
<reference key="1">
    <citation type="journal article" date="2005" name="Plant Mol. Biol.">
        <title>Expression patterns of purple acid phosphatase genes in Arabidopsis organs and functional analysis of AtPAP23 predominantly transcribed in flower.</title>
        <authorList>
            <person name="Zhu H."/>
            <person name="Qian W."/>
            <person name="Lu X."/>
            <person name="Li D."/>
            <person name="Liu X."/>
            <person name="Liu K."/>
            <person name="Wang D."/>
        </authorList>
    </citation>
    <scope>NUCLEOTIDE SEQUENCE [MRNA]</scope>
    <scope>TISSUE SPECIFICITY</scope>
    <source>
        <strain>cv. Columbia</strain>
    </source>
</reference>
<reference key="2">
    <citation type="journal article" date="2000" name="Nature">
        <title>Sequence and analysis of chromosome 1 of the plant Arabidopsis thaliana.</title>
        <authorList>
            <person name="Theologis A."/>
            <person name="Ecker J.R."/>
            <person name="Palm C.J."/>
            <person name="Federspiel N.A."/>
            <person name="Kaul S."/>
            <person name="White O."/>
            <person name="Alonso J."/>
            <person name="Altafi H."/>
            <person name="Araujo R."/>
            <person name="Bowman C.L."/>
            <person name="Brooks S.Y."/>
            <person name="Buehler E."/>
            <person name="Chan A."/>
            <person name="Chao Q."/>
            <person name="Chen H."/>
            <person name="Cheuk R.F."/>
            <person name="Chin C.W."/>
            <person name="Chung M.K."/>
            <person name="Conn L."/>
            <person name="Conway A.B."/>
            <person name="Conway A.R."/>
            <person name="Creasy T.H."/>
            <person name="Dewar K."/>
            <person name="Dunn P."/>
            <person name="Etgu P."/>
            <person name="Feldblyum T.V."/>
            <person name="Feng J.-D."/>
            <person name="Fong B."/>
            <person name="Fujii C.Y."/>
            <person name="Gill J.E."/>
            <person name="Goldsmith A.D."/>
            <person name="Haas B."/>
            <person name="Hansen N.F."/>
            <person name="Hughes B."/>
            <person name="Huizar L."/>
            <person name="Hunter J.L."/>
            <person name="Jenkins J."/>
            <person name="Johnson-Hopson C."/>
            <person name="Khan S."/>
            <person name="Khaykin E."/>
            <person name="Kim C.J."/>
            <person name="Koo H.L."/>
            <person name="Kremenetskaia I."/>
            <person name="Kurtz D.B."/>
            <person name="Kwan A."/>
            <person name="Lam B."/>
            <person name="Langin-Hooper S."/>
            <person name="Lee A."/>
            <person name="Lee J.M."/>
            <person name="Lenz C.A."/>
            <person name="Li J.H."/>
            <person name="Li Y.-P."/>
            <person name="Lin X."/>
            <person name="Liu S.X."/>
            <person name="Liu Z.A."/>
            <person name="Luros J.S."/>
            <person name="Maiti R."/>
            <person name="Marziali A."/>
            <person name="Militscher J."/>
            <person name="Miranda M."/>
            <person name="Nguyen M."/>
            <person name="Nierman W.C."/>
            <person name="Osborne B.I."/>
            <person name="Pai G."/>
            <person name="Peterson J."/>
            <person name="Pham P.K."/>
            <person name="Rizzo M."/>
            <person name="Rooney T."/>
            <person name="Rowley D."/>
            <person name="Sakano H."/>
            <person name="Salzberg S.L."/>
            <person name="Schwartz J.R."/>
            <person name="Shinn P."/>
            <person name="Southwick A.M."/>
            <person name="Sun H."/>
            <person name="Tallon L.J."/>
            <person name="Tambunga G."/>
            <person name="Toriumi M.J."/>
            <person name="Town C.D."/>
            <person name="Utterback T."/>
            <person name="Van Aken S."/>
            <person name="Vaysberg M."/>
            <person name="Vysotskaia V.S."/>
            <person name="Walker M."/>
            <person name="Wu D."/>
            <person name="Yu G."/>
            <person name="Fraser C.M."/>
            <person name="Venter J.C."/>
            <person name="Davis R.W."/>
        </authorList>
    </citation>
    <scope>NUCLEOTIDE SEQUENCE [LARGE SCALE GENOMIC DNA]</scope>
    <source>
        <strain>cv. Columbia</strain>
    </source>
</reference>
<reference key="3">
    <citation type="journal article" date="2017" name="Plant J.">
        <title>Araport11: a complete reannotation of the Arabidopsis thaliana reference genome.</title>
        <authorList>
            <person name="Cheng C.Y."/>
            <person name="Krishnakumar V."/>
            <person name="Chan A.P."/>
            <person name="Thibaud-Nissen F."/>
            <person name="Schobel S."/>
            <person name="Town C.D."/>
        </authorList>
    </citation>
    <scope>GENOME REANNOTATION</scope>
    <source>
        <strain>cv. Columbia</strain>
    </source>
</reference>
<reference key="4">
    <citation type="journal article" date="2003" name="Science">
        <title>Empirical analysis of transcriptional activity in the Arabidopsis genome.</title>
        <authorList>
            <person name="Yamada K."/>
            <person name="Lim J."/>
            <person name="Dale J.M."/>
            <person name="Chen H."/>
            <person name="Shinn P."/>
            <person name="Palm C.J."/>
            <person name="Southwick A.M."/>
            <person name="Wu H.C."/>
            <person name="Kim C.J."/>
            <person name="Nguyen M."/>
            <person name="Pham P.K."/>
            <person name="Cheuk R.F."/>
            <person name="Karlin-Newmann G."/>
            <person name="Liu S.X."/>
            <person name="Lam B."/>
            <person name="Sakano H."/>
            <person name="Wu T."/>
            <person name="Yu G."/>
            <person name="Miranda M."/>
            <person name="Quach H.L."/>
            <person name="Tripp M."/>
            <person name="Chang C.H."/>
            <person name="Lee J.M."/>
            <person name="Toriumi M.J."/>
            <person name="Chan M.M."/>
            <person name="Tang C.C."/>
            <person name="Onodera C.S."/>
            <person name="Deng J.M."/>
            <person name="Akiyama K."/>
            <person name="Ansari Y."/>
            <person name="Arakawa T."/>
            <person name="Banh J."/>
            <person name="Banno F."/>
            <person name="Bowser L."/>
            <person name="Brooks S.Y."/>
            <person name="Carninci P."/>
            <person name="Chao Q."/>
            <person name="Choy N."/>
            <person name="Enju A."/>
            <person name="Goldsmith A.D."/>
            <person name="Gurjal M."/>
            <person name="Hansen N.F."/>
            <person name="Hayashizaki Y."/>
            <person name="Johnson-Hopson C."/>
            <person name="Hsuan V.W."/>
            <person name="Iida K."/>
            <person name="Karnes M."/>
            <person name="Khan S."/>
            <person name="Koesema E."/>
            <person name="Ishida J."/>
            <person name="Jiang P.X."/>
            <person name="Jones T."/>
            <person name="Kawai J."/>
            <person name="Kamiya A."/>
            <person name="Meyers C."/>
            <person name="Nakajima M."/>
            <person name="Narusaka M."/>
            <person name="Seki M."/>
            <person name="Sakurai T."/>
            <person name="Satou M."/>
            <person name="Tamse R."/>
            <person name="Vaysberg M."/>
            <person name="Wallender E.K."/>
            <person name="Wong C."/>
            <person name="Yamamura Y."/>
            <person name="Yuan S."/>
            <person name="Shinozaki K."/>
            <person name="Davis R.W."/>
            <person name="Theologis A."/>
            <person name="Ecker J.R."/>
        </authorList>
    </citation>
    <scope>NUCLEOTIDE SEQUENCE [LARGE SCALE MRNA]</scope>
    <source>
        <strain>cv. Columbia</strain>
    </source>
</reference>
<reference key="5">
    <citation type="journal article" date="2002" name="J. Biol. Chem.">
        <title>Purple acid phosphatases of Arabidopsis thaliana. Comparative analysis and differential regulation by phosphate deprivation.</title>
        <authorList>
            <person name="Li D."/>
            <person name="Zhu H."/>
            <person name="Liu K."/>
            <person name="Liu X."/>
            <person name="Leggewie G."/>
            <person name="Udvardi M."/>
            <person name="Wang D."/>
        </authorList>
    </citation>
    <scope>GENE FAMILY</scope>
    <scope>NOMENCLATURE</scope>
</reference>
<protein>
    <recommendedName>
        <fullName>Probable inactive purple acid phosphatase 1</fullName>
    </recommendedName>
</protein>
<sequence>MRESLVAILVTVISVLGAIHQVKSHEDQPLSGIAVHKITFGLNEKAYVKASPTVLGSNGQHSELVLVQYSSPKPSDDDWIGVFSPADFNASTCPGDNKMVQPPRLCSAPVKFQYANFSNPRYTNTGTGSLKLQLINQRSDFSFALFSGGLLNPKLVAISNKVAFENPNAPVYPRLALGKEWDEMTVTWTSGYGLNLAEPVVEWGVKGGERKLSPAGTLTFARNSMCGAPARTVGWRDPGYIHTAFLKELWPNSKYTYRVGHRLSNGALIWSKEYQFKSSPFPGQNSVQQVVIFGDMGKAEVDGSSEYNDFQRASLNTTKQLIKDLKKTDAVFHIGDICYANGYLSQWDQFIAQIEPIASTVPYMIASGNHERVWPNSGSFYEGLDSGGECGVPAETMFYVPAQNRAKVWYSSDYGMFRFCVADTEHDWREGTEQYNFIEHCLASVDRQKQPWLIFLAHRVLGYSSTYFYAEEGSFAEPMGRESLQKLWQKYKVDIAIYGHAHNYERTCPVYQSVCTSHEKSNYKAPLNGTIHIVAGGGGAGLAEFSDLQPNWSLFRDYDYGFLKLTAIDHSNLLFEYKKSSDGRVHDSFTISKDYRDILACAVDSCPATTLAS</sequence>
<keyword id="KW-0325">Glycoprotein</keyword>
<keyword id="KW-0408">Iron</keyword>
<keyword id="KW-0479">Metal-binding</keyword>
<keyword id="KW-1185">Reference proteome</keyword>
<keyword id="KW-0964">Secreted</keyword>
<keyword id="KW-0732">Signal</keyword>
<keyword id="KW-0862">Zinc</keyword>